<sequence length="210" mass="21470">MVVAKVCGVRDAGAAAAAAAAGAGFVGMVCVPGRRRTVGREEARAIAAAVRGAPGTRLVGVFQDQAPEEVLRLQRELGLDAVQLHGAEDWAAFRAQLPASTLLIKSFVFPRDCEAALAMHRAARGRNCMVLFDAAGGGSGARLDWAALAAWGAAHADVQFMLAGGLTPANVAEAARLPGVVAVDVSSGVETGGAKDGNKIRQFVENAKGI</sequence>
<reference key="1">
    <citation type="journal article" date="2004" name="Science">
        <title>The Ashbya gossypii genome as a tool for mapping the ancient Saccharomyces cerevisiae genome.</title>
        <authorList>
            <person name="Dietrich F.S."/>
            <person name="Voegeli S."/>
            <person name="Brachat S."/>
            <person name="Lerch A."/>
            <person name="Gates K."/>
            <person name="Steiner S."/>
            <person name="Mohr C."/>
            <person name="Poehlmann R."/>
            <person name="Luedi P."/>
            <person name="Choi S."/>
            <person name="Wing R.A."/>
            <person name="Flavier A."/>
            <person name="Gaffney T.D."/>
            <person name="Philippsen P."/>
        </authorList>
    </citation>
    <scope>NUCLEOTIDE SEQUENCE [LARGE SCALE GENOMIC DNA]</scope>
    <source>
        <strain>ATCC 10895 / CBS 109.51 / FGSC 9923 / NRRL Y-1056</strain>
    </source>
</reference>
<reference key="2">
    <citation type="journal article" date="2013" name="G3 (Bethesda)">
        <title>Genomes of Ashbya fungi isolated from insects reveal four mating-type loci, numerous translocations, lack of transposons, and distinct gene duplications.</title>
        <authorList>
            <person name="Dietrich F.S."/>
            <person name="Voegeli S."/>
            <person name="Kuo S."/>
            <person name="Philippsen P."/>
        </authorList>
    </citation>
    <scope>GENOME REANNOTATION</scope>
    <source>
        <strain>ATCC 10895 / CBS 109.51 / FGSC 9923 / NRRL Y-1056</strain>
    </source>
</reference>
<dbReference type="EC" id="5.3.1.24"/>
<dbReference type="EMBL" id="AE016818">
    <property type="protein sequence ID" value="AAS52698.1"/>
    <property type="molecule type" value="Genomic_DNA"/>
</dbReference>
<dbReference type="RefSeq" id="NP_984874.1">
    <property type="nucleotide sequence ID" value="NM_210228.1"/>
</dbReference>
<dbReference type="SMR" id="Q757J9"/>
<dbReference type="FunCoup" id="Q757J9">
    <property type="interactions" value="157"/>
</dbReference>
<dbReference type="STRING" id="284811.Q757J9"/>
<dbReference type="EnsemblFungi" id="AAS52698">
    <property type="protein sequence ID" value="AAS52698"/>
    <property type="gene ID" value="AGOS_AER014W"/>
</dbReference>
<dbReference type="GeneID" id="4621074"/>
<dbReference type="KEGG" id="ago:AGOS_AER014W"/>
<dbReference type="eggNOG" id="KOG4202">
    <property type="taxonomic scope" value="Eukaryota"/>
</dbReference>
<dbReference type="HOGENOM" id="CLU_076364_1_0_1"/>
<dbReference type="InParanoid" id="Q757J9"/>
<dbReference type="OMA" id="FHGDESP"/>
<dbReference type="OrthoDB" id="524799at2759"/>
<dbReference type="UniPathway" id="UPA00035">
    <property type="reaction ID" value="UER00042"/>
</dbReference>
<dbReference type="Proteomes" id="UP000000591">
    <property type="component" value="Chromosome V"/>
</dbReference>
<dbReference type="GO" id="GO:0004640">
    <property type="term" value="F:phosphoribosylanthranilate isomerase activity"/>
    <property type="evidence" value="ECO:0000318"/>
    <property type="project" value="GO_Central"/>
</dbReference>
<dbReference type="GO" id="GO:0000162">
    <property type="term" value="P:L-tryptophan biosynthetic process"/>
    <property type="evidence" value="ECO:0000318"/>
    <property type="project" value="GO_Central"/>
</dbReference>
<dbReference type="CDD" id="cd00405">
    <property type="entry name" value="PRAI"/>
    <property type="match status" value="1"/>
</dbReference>
<dbReference type="Gene3D" id="3.20.20.70">
    <property type="entry name" value="Aldolase class I"/>
    <property type="match status" value="1"/>
</dbReference>
<dbReference type="HAMAP" id="MF_00135">
    <property type="entry name" value="PRAI"/>
    <property type="match status" value="1"/>
</dbReference>
<dbReference type="InterPro" id="IPR013785">
    <property type="entry name" value="Aldolase_TIM"/>
</dbReference>
<dbReference type="InterPro" id="IPR001240">
    <property type="entry name" value="PRAI_dom"/>
</dbReference>
<dbReference type="InterPro" id="IPR011060">
    <property type="entry name" value="RibuloseP-bd_barrel"/>
</dbReference>
<dbReference type="InterPro" id="IPR044643">
    <property type="entry name" value="TrpF_fam"/>
</dbReference>
<dbReference type="PANTHER" id="PTHR42894">
    <property type="entry name" value="N-(5'-PHOSPHORIBOSYL)ANTHRANILATE ISOMERASE"/>
    <property type="match status" value="1"/>
</dbReference>
<dbReference type="PANTHER" id="PTHR42894:SF1">
    <property type="entry name" value="N-(5'-PHOSPHORIBOSYL)ANTHRANILATE ISOMERASE"/>
    <property type="match status" value="1"/>
</dbReference>
<dbReference type="Pfam" id="PF00697">
    <property type="entry name" value="PRAI"/>
    <property type="match status" value="1"/>
</dbReference>
<dbReference type="SUPFAM" id="SSF51366">
    <property type="entry name" value="Ribulose-phoshate binding barrel"/>
    <property type="match status" value="1"/>
</dbReference>
<gene>
    <name type="primary">TRP1</name>
    <name type="ordered locus">AER014W</name>
</gene>
<keyword id="KW-0028">Amino-acid biosynthesis</keyword>
<keyword id="KW-0057">Aromatic amino acid biosynthesis</keyword>
<keyword id="KW-0413">Isomerase</keyword>
<keyword id="KW-1185">Reference proteome</keyword>
<keyword id="KW-0822">Tryptophan biosynthesis</keyword>
<proteinExistence type="inferred from homology"/>
<name>TRPF_EREGS</name>
<evidence type="ECO:0000305" key="1"/>
<comment type="catalytic activity">
    <reaction>
        <text>N-(5-phospho-beta-D-ribosyl)anthranilate = 1-(2-carboxyphenylamino)-1-deoxy-D-ribulose 5-phosphate</text>
        <dbReference type="Rhea" id="RHEA:21540"/>
        <dbReference type="ChEBI" id="CHEBI:18277"/>
        <dbReference type="ChEBI" id="CHEBI:58613"/>
        <dbReference type="EC" id="5.3.1.24"/>
    </reaction>
</comment>
<comment type="pathway">
    <text>Amino-acid biosynthesis; L-tryptophan biosynthesis; L-tryptophan from chorismate: step 3/5.</text>
</comment>
<comment type="similarity">
    <text evidence="1">Belongs to the TrpF family.</text>
</comment>
<feature type="chain" id="PRO_0000154329" description="N-(5'-phosphoribosyl)anthranilate isomerase">
    <location>
        <begin position="1"/>
        <end position="210"/>
    </location>
</feature>
<accession>Q757J9</accession>
<organism>
    <name type="scientific">Eremothecium gossypii (strain ATCC 10895 / CBS 109.51 / FGSC 9923 / NRRL Y-1056)</name>
    <name type="common">Yeast</name>
    <name type="synonym">Ashbya gossypii</name>
    <dbReference type="NCBI Taxonomy" id="284811"/>
    <lineage>
        <taxon>Eukaryota</taxon>
        <taxon>Fungi</taxon>
        <taxon>Dikarya</taxon>
        <taxon>Ascomycota</taxon>
        <taxon>Saccharomycotina</taxon>
        <taxon>Saccharomycetes</taxon>
        <taxon>Saccharomycetales</taxon>
        <taxon>Saccharomycetaceae</taxon>
        <taxon>Eremothecium</taxon>
    </lineage>
</organism>
<protein>
    <recommendedName>
        <fullName>N-(5'-phosphoribosyl)anthranilate isomerase</fullName>
        <shortName>PRAI</shortName>
        <ecNumber>5.3.1.24</ecNumber>
    </recommendedName>
</protein>